<gene>
    <name type="ordered locus">IL0325</name>
</gene>
<feature type="chain" id="PRO_1000045165" description="UPF0270 protein IL0325">
    <location>
        <begin position="1"/>
        <end position="78"/>
    </location>
</feature>
<comment type="similarity">
    <text evidence="1">Belongs to the UPF0270 family.</text>
</comment>
<organism>
    <name type="scientific">Idiomarina loihiensis (strain ATCC BAA-735 / DSM 15497 / L2-TR)</name>
    <dbReference type="NCBI Taxonomy" id="283942"/>
    <lineage>
        <taxon>Bacteria</taxon>
        <taxon>Pseudomonadati</taxon>
        <taxon>Pseudomonadota</taxon>
        <taxon>Gammaproteobacteria</taxon>
        <taxon>Alteromonadales</taxon>
        <taxon>Idiomarinaceae</taxon>
        <taxon>Idiomarina</taxon>
    </lineage>
</organism>
<protein>
    <recommendedName>
        <fullName evidence="1">UPF0270 protein IL0325</fullName>
    </recommendedName>
</protein>
<accession>Q5QW88</accession>
<evidence type="ECO:0000255" key="1">
    <source>
        <dbReference type="HAMAP-Rule" id="MF_00690"/>
    </source>
</evidence>
<name>Y325_IDILO</name>
<proteinExistence type="inferred from homology"/>
<sequence length="78" mass="8839">MIIPWQEIDQETLNNLMESIVLREGTDYGSQELSFETKVEQLKQRLKSGEAVIVYSELHESVDVVNKDSVTGNEPDGQ</sequence>
<dbReference type="EMBL" id="AE017340">
    <property type="protein sequence ID" value="AAV81168.1"/>
    <property type="molecule type" value="Genomic_DNA"/>
</dbReference>
<dbReference type="RefSeq" id="WP_011233587.1">
    <property type="nucleotide sequence ID" value="NC_006512.1"/>
</dbReference>
<dbReference type="SMR" id="Q5QW88"/>
<dbReference type="STRING" id="283942.IL0325"/>
<dbReference type="GeneID" id="41335472"/>
<dbReference type="KEGG" id="ilo:IL0325"/>
<dbReference type="eggNOG" id="COG3089">
    <property type="taxonomic scope" value="Bacteria"/>
</dbReference>
<dbReference type="HOGENOM" id="CLU_186759_1_0_6"/>
<dbReference type="OrthoDB" id="6120729at2"/>
<dbReference type="Proteomes" id="UP000001171">
    <property type="component" value="Chromosome"/>
</dbReference>
<dbReference type="Gene3D" id="1.10.10.610">
    <property type="entry name" value="YehU-like"/>
    <property type="match status" value="1"/>
</dbReference>
<dbReference type="HAMAP" id="MF_00690">
    <property type="entry name" value="UPF0270"/>
    <property type="match status" value="1"/>
</dbReference>
<dbReference type="InterPro" id="IPR010648">
    <property type="entry name" value="UPF0270"/>
</dbReference>
<dbReference type="InterPro" id="IPR036685">
    <property type="entry name" value="YehU-like_sf"/>
</dbReference>
<dbReference type="NCBIfam" id="NF003438">
    <property type="entry name" value="PRK04966.1"/>
    <property type="match status" value="1"/>
</dbReference>
<dbReference type="Pfam" id="PF06794">
    <property type="entry name" value="UPF0270"/>
    <property type="match status" value="1"/>
</dbReference>
<dbReference type="PIRSF" id="PIRSF006169">
    <property type="entry name" value="UCP006169"/>
    <property type="match status" value="1"/>
</dbReference>
<dbReference type="SUPFAM" id="SSF118001">
    <property type="entry name" value="YehU-like"/>
    <property type="match status" value="1"/>
</dbReference>
<reference key="1">
    <citation type="journal article" date="2004" name="Proc. Natl. Acad. Sci. U.S.A.">
        <title>Genome sequence of the deep-sea gamma-proteobacterium Idiomarina loihiensis reveals amino acid fermentation as a source of carbon and energy.</title>
        <authorList>
            <person name="Hou S."/>
            <person name="Saw J.H."/>
            <person name="Lee K.S."/>
            <person name="Freitas T.A."/>
            <person name="Belisle C."/>
            <person name="Kawarabayasi Y."/>
            <person name="Donachie S.P."/>
            <person name="Pikina A."/>
            <person name="Galperin M.Y."/>
            <person name="Koonin E.V."/>
            <person name="Makarova K.S."/>
            <person name="Omelchenko M.V."/>
            <person name="Sorokin A."/>
            <person name="Wolf Y.I."/>
            <person name="Li Q.X."/>
            <person name="Keum Y.S."/>
            <person name="Campbell S."/>
            <person name="Denery J."/>
            <person name="Aizawa S."/>
            <person name="Shibata S."/>
            <person name="Malahoff A."/>
            <person name="Alam M."/>
        </authorList>
    </citation>
    <scope>NUCLEOTIDE SEQUENCE [LARGE SCALE GENOMIC DNA]</scope>
    <source>
        <strain>ATCC BAA-735 / DSM 15497 / L2-TR</strain>
    </source>
</reference>
<keyword id="KW-1185">Reference proteome</keyword>